<organism>
    <name type="scientific">Thermosipho africanus (strain TCF52B)</name>
    <dbReference type="NCBI Taxonomy" id="484019"/>
    <lineage>
        <taxon>Bacteria</taxon>
        <taxon>Thermotogati</taxon>
        <taxon>Thermotogota</taxon>
        <taxon>Thermotogae</taxon>
        <taxon>Thermotogales</taxon>
        <taxon>Fervidobacteriaceae</taxon>
        <taxon>Thermosipho</taxon>
    </lineage>
</organism>
<reference key="1">
    <citation type="journal article" date="2009" name="J. Bacteriol.">
        <title>The genome of Thermosipho africanus TCF52B: lateral genetic connections to the Firmicutes and Archaea.</title>
        <authorList>
            <person name="Nesboe C.L."/>
            <person name="Bapteste E."/>
            <person name="Curtis B."/>
            <person name="Dahle H."/>
            <person name="Lopez P."/>
            <person name="Macleod D."/>
            <person name="Dlutek M."/>
            <person name="Bowman S."/>
            <person name="Zhaxybayeva O."/>
            <person name="Birkeland N.-K."/>
            <person name="Doolittle W.F."/>
        </authorList>
    </citation>
    <scope>NUCLEOTIDE SEQUENCE [LARGE SCALE GENOMIC DNA]</scope>
    <source>
        <strain>TCF52B</strain>
    </source>
</reference>
<sequence>MKMIIGRKVGMTRIFKDDKVIPVTVIKAGPCYVVQKKTIDTDGYNAIQIGFEEAKKVNKPMEGVFKKAGVKPLKILKEFRVENPEEFELGQEIKVDIFAEGDKIDITGWSKGRGFAGAMKRWGFRGGPKSHGAKFHRELGSVGQHSEPARIFKGKKMPGQYGNERVTILNSEIVKIDVENNLIAVKGGVPGARGGLVLIRTAKRG</sequence>
<proteinExistence type="inferred from homology"/>
<comment type="function">
    <text evidence="1">One of the primary rRNA binding proteins, it binds directly near the 3'-end of the 23S rRNA, where it nucleates assembly of the 50S subunit.</text>
</comment>
<comment type="subunit">
    <text evidence="1">Part of the 50S ribosomal subunit. Forms a cluster with proteins L14 and L19.</text>
</comment>
<comment type="similarity">
    <text evidence="1">Belongs to the universal ribosomal protein uL3 family.</text>
</comment>
<protein>
    <recommendedName>
        <fullName evidence="1">Large ribosomal subunit protein uL3</fullName>
    </recommendedName>
    <alternativeName>
        <fullName evidence="2">50S ribosomal protein L3</fullName>
    </alternativeName>
</protein>
<keyword id="KW-1185">Reference proteome</keyword>
<keyword id="KW-0687">Ribonucleoprotein</keyword>
<keyword id="KW-0689">Ribosomal protein</keyword>
<keyword id="KW-0694">RNA-binding</keyword>
<keyword id="KW-0699">rRNA-binding</keyword>
<name>RL3_THEAB</name>
<evidence type="ECO:0000255" key="1">
    <source>
        <dbReference type="HAMAP-Rule" id="MF_01325"/>
    </source>
</evidence>
<evidence type="ECO:0000305" key="2"/>
<accession>B7IHU6</accession>
<gene>
    <name evidence="1" type="primary">rplC</name>
    <name type="ordered locus">THA_1215</name>
</gene>
<feature type="chain" id="PRO_1000141933" description="Large ribosomal subunit protein uL3">
    <location>
        <begin position="1"/>
        <end position="205"/>
    </location>
</feature>
<dbReference type="EMBL" id="CP001185">
    <property type="protein sequence ID" value="ACJ75660.1"/>
    <property type="molecule type" value="Genomic_DNA"/>
</dbReference>
<dbReference type="RefSeq" id="WP_004101438.1">
    <property type="nucleotide sequence ID" value="NC_011653.1"/>
</dbReference>
<dbReference type="SMR" id="B7IHU6"/>
<dbReference type="STRING" id="484019.THA_1215"/>
<dbReference type="KEGG" id="taf:THA_1215"/>
<dbReference type="eggNOG" id="COG0087">
    <property type="taxonomic scope" value="Bacteria"/>
</dbReference>
<dbReference type="HOGENOM" id="CLU_044142_4_1_0"/>
<dbReference type="OrthoDB" id="9806135at2"/>
<dbReference type="Proteomes" id="UP000002453">
    <property type="component" value="Chromosome"/>
</dbReference>
<dbReference type="GO" id="GO:0022625">
    <property type="term" value="C:cytosolic large ribosomal subunit"/>
    <property type="evidence" value="ECO:0007669"/>
    <property type="project" value="TreeGrafter"/>
</dbReference>
<dbReference type="GO" id="GO:0019843">
    <property type="term" value="F:rRNA binding"/>
    <property type="evidence" value="ECO:0007669"/>
    <property type="project" value="UniProtKB-UniRule"/>
</dbReference>
<dbReference type="GO" id="GO:0003735">
    <property type="term" value="F:structural constituent of ribosome"/>
    <property type="evidence" value="ECO:0007669"/>
    <property type="project" value="InterPro"/>
</dbReference>
<dbReference type="GO" id="GO:0006412">
    <property type="term" value="P:translation"/>
    <property type="evidence" value="ECO:0007669"/>
    <property type="project" value="UniProtKB-UniRule"/>
</dbReference>
<dbReference type="FunFam" id="2.40.30.10:FF:000004">
    <property type="entry name" value="50S ribosomal protein L3"/>
    <property type="match status" value="1"/>
</dbReference>
<dbReference type="FunFam" id="3.30.160.810:FF:000001">
    <property type="entry name" value="50S ribosomal protein L3"/>
    <property type="match status" value="1"/>
</dbReference>
<dbReference type="Gene3D" id="3.30.160.810">
    <property type="match status" value="1"/>
</dbReference>
<dbReference type="Gene3D" id="2.40.30.10">
    <property type="entry name" value="Translation factors"/>
    <property type="match status" value="1"/>
</dbReference>
<dbReference type="HAMAP" id="MF_01325_B">
    <property type="entry name" value="Ribosomal_uL3_B"/>
    <property type="match status" value="1"/>
</dbReference>
<dbReference type="InterPro" id="IPR000597">
    <property type="entry name" value="Ribosomal_uL3"/>
</dbReference>
<dbReference type="InterPro" id="IPR019927">
    <property type="entry name" value="Ribosomal_uL3_bac/org-type"/>
</dbReference>
<dbReference type="InterPro" id="IPR019926">
    <property type="entry name" value="Ribosomal_uL3_CS"/>
</dbReference>
<dbReference type="InterPro" id="IPR009000">
    <property type="entry name" value="Transl_B-barrel_sf"/>
</dbReference>
<dbReference type="NCBIfam" id="TIGR03625">
    <property type="entry name" value="L3_bact"/>
    <property type="match status" value="1"/>
</dbReference>
<dbReference type="PANTHER" id="PTHR11229">
    <property type="entry name" value="50S RIBOSOMAL PROTEIN L3"/>
    <property type="match status" value="1"/>
</dbReference>
<dbReference type="PANTHER" id="PTHR11229:SF16">
    <property type="entry name" value="LARGE RIBOSOMAL SUBUNIT PROTEIN UL3C"/>
    <property type="match status" value="1"/>
</dbReference>
<dbReference type="Pfam" id="PF00297">
    <property type="entry name" value="Ribosomal_L3"/>
    <property type="match status" value="1"/>
</dbReference>
<dbReference type="SUPFAM" id="SSF50447">
    <property type="entry name" value="Translation proteins"/>
    <property type="match status" value="1"/>
</dbReference>
<dbReference type="PROSITE" id="PS00474">
    <property type="entry name" value="RIBOSOMAL_L3"/>
    <property type="match status" value="1"/>
</dbReference>